<evidence type="ECO:0000305" key="1"/>
<evidence type="ECO:0000312" key="2">
    <source>
        <dbReference type="PomBase" id="SPCC126.12"/>
    </source>
</evidence>
<feature type="chain" id="PRO_0000147355" description="Protein NIF3 homolog">
    <location>
        <begin position="1"/>
        <end position="278"/>
    </location>
</feature>
<reference key="1">
    <citation type="journal article" date="2002" name="Nature">
        <title>The genome sequence of Schizosaccharomyces pombe.</title>
        <authorList>
            <person name="Wood V."/>
            <person name="Gwilliam R."/>
            <person name="Rajandream M.A."/>
            <person name="Lyne M.H."/>
            <person name="Lyne R."/>
            <person name="Stewart A."/>
            <person name="Sgouros J.G."/>
            <person name="Peat N."/>
            <person name="Hayles J."/>
            <person name="Baker S.G."/>
            <person name="Basham D."/>
            <person name="Bowman S."/>
            <person name="Brooks K."/>
            <person name="Brown D."/>
            <person name="Brown S."/>
            <person name="Chillingworth T."/>
            <person name="Churcher C.M."/>
            <person name="Collins M."/>
            <person name="Connor R."/>
            <person name="Cronin A."/>
            <person name="Davis P."/>
            <person name="Feltwell T."/>
            <person name="Fraser A."/>
            <person name="Gentles S."/>
            <person name="Goble A."/>
            <person name="Hamlin N."/>
            <person name="Harris D.E."/>
            <person name="Hidalgo J."/>
            <person name="Hodgson G."/>
            <person name="Holroyd S."/>
            <person name="Hornsby T."/>
            <person name="Howarth S."/>
            <person name="Huckle E.J."/>
            <person name="Hunt S."/>
            <person name="Jagels K."/>
            <person name="James K.D."/>
            <person name="Jones L."/>
            <person name="Jones M."/>
            <person name="Leather S."/>
            <person name="McDonald S."/>
            <person name="McLean J."/>
            <person name="Mooney P."/>
            <person name="Moule S."/>
            <person name="Mungall K.L."/>
            <person name="Murphy L.D."/>
            <person name="Niblett D."/>
            <person name="Odell C."/>
            <person name="Oliver K."/>
            <person name="O'Neil S."/>
            <person name="Pearson D."/>
            <person name="Quail M.A."/>
            <person name="Rabbinowitsch E."/>
            <person name="Rutherford K.M."/>
            <person name="Rutter S."/>
            <person name="Saunders D."/>
            <person name="Seeger K."/>
            <person name="Sharp S."/>
            <person name="Skelton J."/>
            <person name="Simmonds M.N."/>
            <person name="Squares R."/>
            <person name="Squares S."/>
            <person name="Stevens K."/>
            <person name="Taylor K."/>
            <person name="Taylor R.G."/>
            <person name="Tivey A."/>
            <person name="Walsh S.V."/>
            <person name="Warren T."/>
            <person name="Whitehead S."/>
            <person name="Woodward J.R."/>
            <person name="Volckaert G."/>
            <person name="Aert R."/>
            <person name="Robben J."/>
            <person name="Grymonprez B."/>
            <person name="Weltjens I."/>
            <person name="Vanstreels E."/>
            <person name="Rieger M."/>
            <person name="Schaefer M."/>
            <person name="Mueller-Auer S."/>
            <person name="Gabel C."/>
            <person name="Fuchs M."/>
            <person name="Duesterhoeft A."/>
            <person name="Fritzc C."/>
            <person name="Holzer E."/>
            <person name="Moestl D."/>
            <person name="Hilbert H."/>
            <person name="Borzym K."/>
            <person name="Langer I."/>
            <person name="Beck A."/>
            <person name="Lehrach H."/>
            <person name="Reinhardt R."/>
            <person name="Pohl T.M."/>
            <person name="Eger P."/>
            <person name="Zimmermann W."/>
            <person name="Wedler H."/>
            <person name="Wambutt R."/>
            <person name="Purnelle B."/>
            <person name="Goffeau A."/>
            <person name="Cadieu E."/>
            <person name="Dreano S."/>
            <person name="Gloux S."/>
            <person name="Lelaure V."/>
            <person name="Mottier S."/>
            <person name="Galibert F."/>
            <person name="Aves S.J."/>
            <person name="Xiang Z."/>
            <person name="Hunt C."/>
            <person name="Moore K."/>
            <person name="Hurst S.M."/>
            <person name="Lucas M."/>
            <person name="Rochet M."/>
            <person name="Gaillardin C."/>
            <person name="Tallada V.A."/>
            <person name="Garzon A."/>
            <person name="Thode G."/>
            <person name="Daga R.R."/>
            <person name="Cruzado L."/>
            <person name="Jimenez J."/>
            <person name="Sanchez M."/>
            <person name="del Rey F."/>
            <person name="Benito J."/>
            <person name="Dominguez A."/>
            <person name="Revuelta J.L."/>
            <person name="Moreno S."/>
            <person name="Armstrong J."/>
            <person name="Forsburg S.L."/>
            <person name="Cerutti L."/>
            <person name="Lowe T."/>
            <person name="McCombie W.R."/>
            <person name="Paulsen I."/>
            <person name="Potashkin J."/>
            <person name="Shpakovski G.V."/>
            <person name="Ussery D."/>
            <person name="Barrell B.G."/>
            <person name="Nurse P."/>
        </authorList>
    </citation>
    <scope>NUCLEOTIDE SEQUENCE [LARGE SCALE GENOMIC DNA]</scope>
    <source>
        <strain>972 / ATCC 24843</strain>
    </source>
</reference>
<proteinExistence type="inferred from homology"/>
<accession>O94404</accession>
<gene>
    <name evidence="2" type="ORF">SPCC126.12</name>
</gene>
<comment type="similarity">
    <text evidence="1">Belongs to the GTP cyclohydrolase I type 2/NIF3 family.</text>
</comment>
<dbReference type="EMBL" id="CU329672">
    <property type="protein sequence ID" value="CAA22481.1"/>
    <property type="molecule type" value="Genomic_DNA"/>
</dbReference>
<dbReference type="PIR" id="T40916">
    <property type="entry name" value="T40916"/>
</dbReference>
<dbReference type="RefSeq" id="NP_588455.1">
    <property type="nucleotide sequence ID" value="NM_001023446.2"/>
</dbReference>
<dbReference type="SMR" id="O94404"/>
<dbReference type="BioGRID" id="275635">
    <property type="interactions" value="9"/>
</dbReference>
<dbReference type="FunCoup" id="O94404">
    <property type="interactions" value="634"/>
</dbReference>
<dbReference type="STRING" id="284812.O94404"/>
<dbReference type="iPTMnet" id="O94404"/>
<dbReference type="PaxDb" id="4896-SPCC126.12.1"/>
<dbReference type="EnsemblFungi" id="SPCC126.12.1">
    <property type="protein sequence ID" value="SPCC126.12.1:pep"/>
    <property type="gene ID" value="SPCC126.12"/>
</dbReference>
<dbReference type="KEGG" id="spo:2539063"/>
<dbReference type="PomBase" id="SPCC126.12"/>
<dbReference type="VEuPathDB" id="FungiDB:SPCC126.12"/>
<dbReference type="eggNOG" id="KOG4131">
    <property type="taxonomic scope" value="Eukaryota"/>
</dbReference>
<dbReference type="HOGENOM" id="CLU_037423_0_1_1"/>
<dbReference type="InParanoid" id="O94404"/>
<dbReference type="OMA" id="DINWSAR"/>
<dbReference type="PhylomeDB" id="O94404"/>
<dbReference type="PRO" id="PR:O94404"/>
<dbReference type="Proteomes" id="UP000002485">
    <property type="component" value="Chromosome III"/>
</dbReference>
<dbReference type="GO" id="GO:0005737">
    <property type="term" value="C:cytoplasm"/>
    <property type="evidence" value="ECO:0000318"/>
    <property type="project" value="GO_Central"/>
</dbReference>
<dbReference type="GO" id="GO:0005829">
    <property type="term" value="C:cytosol"/>
    <property type="evidence" value="ECO:0007005"/>
    <property type="project" value="PomBase"/>
</dbReference>
<dbReference type="GO" id="GO:0005739">
    <property type="term" value="C:mitochondrion"/>
    <property type="evidence" value="ECO:0000318"/>
    <property type="project" value="GO_Central"/>
</dbReference>
<dbReference type="GO" id="GO:0005634">
    <property type="term" value="C:nucleus"/>
    <property type="evidence" value="ECO:0007005"/>
    <property type="project" value="PomBase"/>
</dbReference>
<dbReference type="FunFam" id="3.40.1390.30:FF:000001">
    <property type="entry name" value="GTP cyclohydrolase 1 type 2"/>
    <property type="match status" value="1"/>
</dbReference>
<dbReference type="Gene3D" id="3.40.1390.30">
    <property type="entry name" value="NIF3 (NGG1p interacting factor 3)-like"/>
    <property type="match status" value="1"/>
</dbReference>
<dbReference type="InterPro" id="IPR002678">
    <property type="entry name" value="DUF34/NIF3"/>
</dbReference>
<dbReference type="InterPro" id="IPR036069">
    <property type="entry name" value="DUF34/NIF3_sf"/>
</dbReference>
<dbReference type="NCBIfam" id="TIGR00486">
    <property type="entry name" value="YbgI_SA1388"/>
    <property type="match status" value="1"/>
</dbReference>
<dbReference type="PANTHER" id="PTHR13799">
    <property type="entry name" value="NGG1 INTERACTING FACTOR 3"/>
    <property type="match status" value="1"/>
</dbReference>
<dbReference type="PANTHER" id="PTHR13799:SF13">
    <property type="entry name" value="NIF3-LIKE PROTEIN 1"/>
    <property type="match status" value="1"/>
</dbReference>
<dbReference type="Pfam" id="PF01784">
    <property type="entry name" value="DUF34_NIF3"/>
    <property type="match status" value="1"/>
</dbReference>
<dbReference type="SUPFAM" id="SSF102705">
    <property type="entry name" value="NIF3 (NGG1p interacting factor 3)-like"/>
    <property type="match status" value="1"/>
</dbReference>
<sequence>MSKANISSKLKKVVESIYNPKLADSWDNTGLLLEAPFPRTNASSVLLTIDLTEKVAEEAISNKLVSSIVAYHPIIFRGLKAITMEDPQQRSLLKLAAEGIHVYSPHTAVDAAVDGVNDWLAQGIAGGRNNIKSVVPTQQNSVMAEAEGYGRICELKIPTTLRELVQRAKELTGLQYVQVCAPNGLDSHISKVSLCAGSGGSVVMNTDADLYFTGELSHHQVLAAMAKGISVILCGHSNTERGYLKDVMCQKLASSFHKEGVDANVIVSSMDADPLTTM</sequence>
<protein>
    <recommendedName>
        <fullName evidence="1">Protein NIF3 homolog</fullName>
    </recommendedName>
</protein>
<name>NIF3_SCHPO</name>
<keyword id="KW-1185">Reference proteome</keyword>
<organism>
    <name type="scientific">Schizosaccharomyces pombe (strain 972 / ATCC 24843)</name>
    <name type="common">Fission yeast</name>
    <dbReference type="NCBI Taxonomy" id="284812"/>
    <lineage>
        <taxon>Eukaryota</taxon>
        <taxon>Fungi</taxon>
        <taxon>Dikarya</taxon>
        <taxon>Ascomycota</taxon>
        <taxon>Taphrinomycotina</taxon>
        <taxon>Schizosaccharomycetes</taxon>
        <taxon>Schizosaccharomycetales</taxon>
        <taxon>Schizosaccharomycetaceae</taxon>
        <taxon>Schizosaccharomyces</taxon>
    </lineage>
</organism>